<dbReference type="EC" id="2.7.7.6" evidence="1"/>
<dbReference type="EMBL" id="CP001616">
    <property type="protein sequence ID" value="ACQ91809.1"/>
    <property type="molecule type" value="Genomic_DNA"/>
</dbReference>
<dbReference type="RefSeq" id="WP_012728408.1">
    <property type="nucleotide sequence ID" value="NC_012691.1"/>
</dbReference>
<dbReference type="SMR" id="C4L810"/>
<dbReference type="STRING" id="595494.Tola_0179"/>
<dbReference type="KEGG" id="tau:Tola_0179"/>
<dbReference type="eggNOG" id="COG1758">
    <property type="taxonomic scope" value="Bacteria"/>
</dbReference>
<dbReference type="HOGENOM" id="CLU_125406_5_3_6"/>
<dbReference type="OrthoDB" id="9796300at2"/>
<dbReference type="Proteomes" id="UP000009073">
    <property type="component" value="Chromosome"/>
</dbReference>
<dbReference type="GO" id="GO:0000428">
    <property type="term" value="C:DNA-directed RNA polymerase complex"/>
    <property type="evidence" value="ECO:0007669"/>
    <property type="project" value="UniProtKB-KW"/>
</dbReference>
<dbReference type="GO" id="GO:0003677">
    <property type="term" value="F:DNA binding"/>
    <property type="evidence" value="ECO:0007669"/>
    <property type="project" value="UniProtKB-UniRule"/>
</dbReference>
<dbReference type="GO" id="GO:0003899">
    <property type="term" value="F:DNA-directed RNA polymerase activity"/>
    <property type="evidence" value="ECO:0007669"/>
    <property type="project" value="UniProtKB-UniRule"/>
</dbReference>
<dbReference type="GO" id="GO:0006351">
    <property type="term" value="P:DNA-templated transcription"/>
    <property type="evidence" value="ECO:0007669"/>
    <property type="project" value="UniProtKB-UniRule"/>
</dbReference>
<dbReference type="Gene3D" id="3.90.940.10">
    <property type="match status" value="1"/>
</dbReference>
<dbReference type="HAMAP" id="MF_00366">
    <property type="entry name" value="RNApol_bact_RpoZ"/>
    <property type="match status" value="1"/>
</dbReference>
<dbReference type="InterPro" id="IPR003716">
    <property type="entry name" value="DNA-dir_RNA_pol_omega"/>
</dbReference>
<dbReference type="InterPro" id="IPR006110">
    <property type="entry name" value="Pol_omega/Rpo6/RPB6"/>
</dbReference>
<dbReference type="InterPro" id="IPR036161">
    <property type="entry name" value="RPB6/omega-like_sf"/>
</dbReference>
<dbReference type="NCBIfam" id="TIGR00690">
    <property type="entry name" value="rpoZ"/>
    <property type="match status" value="1"/>
</dbReference>
<dbReference type="PANTHER" id="PTHR34476">
    <property type="entry name" value="DNA-DIRECTED RNA POLYMERASE SUBUNIT OMEGA"/>
    <property type="match status" value="1"/>
</dbReference>
<dbReference type="PANTHER" id="PTHR34476:SF1">
    <property type="entry name" value="DNA-DIRECTED RNA POLYMERASE SUBUNIT OMEGA"/>
    <property type="match status" value="1"/>
</dbReference>
<dbReference type="Pfam" id="PF01192">
    <property type="entry name" value="RNA_pol_Rpb6"/>
    <property type="match status" value="1"/>
</dbReference>
<dbReference type="SMART" id="SM01409">
    <property type="entry name" value="RNA_pol_Rpb6"/>
    <property type="match status" value="1"/>
</dbReference>
<dbReference type="SUPFAM" id="SSF63562">
    <property type="entry name" value="RPB6/omega subunit-like"/>
    <property type="match status" value="1"/>
</dbReference>
<proteinExistence type="inferred from homology"/>
<comment type="function">
    <text evidence="1">Promotes RNA polymerase assembly. Latches the N- and C-terminal regions of the beta' subunit thereby facilitating its interaction with the beta and alpha subunits.</text>
</comment>
<comment type="catalytic activity">
    <reaction evidence="1">
        <text>RNA(n) + a ribonucleoside 5'-triphosphate = RNA(n+1) + diphosphate</text>
        <dbReference type="Rhea" id="RHEA:21248"/>
        <dbReference type="Rhea" id="RHEA-COMP:14527"/>
        <dbReference type="Rhea" id="RHEA-COMP:17342"/>
        <dbReference type="ChEBI" id="CHEBI:33019"/>
        <dbReference type="ChEBI" id="CHEBI:61557"/>
        <dbReference type="ChEBI" id="CHEBI:140395"/>
        <dbReference type="EC" id="2.7.7.6"/>
    </reaction>
</comment>
<comment type="subunit">
    <text evidence="1">The RNAP catalytic core consists of 2 alpha, 1 beta, 1 beta' and 1 omega subunit. When a sigma factor is associated with the core the holoenzyme is formed, which can initiate transcription.</text>
</comment>
<comment type="similarity">
    <text evidence="1">Belongs to the RNA polymerase subunit omega family.</text>
</comment>
<protein>
    <recommendedName>
        <fullName evidence="1">DNA-directed RNA polymerase subunit omega</fullName>
        <shortName evidence="1">RNAP omega subunit</shortName>
        <ecNumber evidence="1">2.7.7.6</ecNumber>
    </recommendedName>
    <alternativeName>
        <fullName evidence="1">RNA polymerase omega subunit</fullName>
    </alternativeName>
    <alternativeName>
        <fullName evidence="1">Transcriptase subunit omega</fullName>
    </alternativeName>
</protein>
<gene>
    <name evidence="1" type="primary">rpoZ</name>
    <name type="ordered locus">Tola_0179</name>
</gene>
<organism>
    <name type="scientific">Tolumonas auensis (strain DSM 9187 / NBRC 110442 / TA 4)</name>
    <dbReference type="NCBI Taxonomy" id="595494"/>
    <lineage>
        <taxon>Bacteria</taxon>
        <taxon>Pseudomonadati</taxon>
        <taxon>Pseudomonadota</taxon>
        <taxon>Gammaproteobacteria</taxon>
        <taxon>Aeromonadales</taxon>
        <taxon>Aeromonadaceae</taxon>
        <taxon>Tolumonas</taxon>
    </lineage>
</organism>
<evidence type="ECO:0000255" key="1">
    <source>
        <dbReference type="HAMAP-Rule" id="MF_00366"/>
    </source>
</evidence>
<keyword id="KW-0240">DNA-directed RNA polymerase</keyword>
<keyword id="KW-0548">Nucleotidyltransferase</keyword>
<keyword id="KW-1185">Reference proteome</keyword>
<keyword id="KW-0804">Transcription</keyword>
<keyword id="KW-0808">Transferase</keyword>
<sequence>MARVTVEDAVKQVGNRFDLVLVAARRARQLAVQGKEPLVDEENDKPTVIALREIEEGLISNQFMDAQERIEQQQQEASELAAVAALTQDRDYGF</sequence>
<name>RPOZ_TOLAT</name>
<reference key="1">
    <citation type="submission" date="2009-05" db="EMBL/GenBank/DDBJ databases">
        <title>Complete sequence of Tolumonas auensis DSM 9187.</title>
        <authorList>
            <consortium name="US DOE Joint Genome Institute"/>
            <person name="Lucas S."/>
            <person name="Copeland A."/>
            <person name="Lapidus A."/>
            <person name="Glavina del Rio T."/>
            <person name="Tice H."/>
            <person name="Bruce D."/>
            <person name="Goodwin L."/>
            <person name="Pitluck S."/>
            <person name="Chertkov O."/>
            <person name="Brettin T."/>
            <person name="Detter J.C."/>
            <person name="Han C."/>
            <person name="Larimer F."/>
            <person name="Land M."/>
            <person name="Hauser L."/>
            <person name="Kyrpides N."/>
            <person name="Mikhailova N."/>
            <person name="Spring S."/>
            <person name="Beller H."/>
        </authorList>
    </citation>
    <scope>NUCLEOTIDE SEQUENCE [LARGE SCALE GENOMIC DNA]</scope>
    <source>
        <strain>DSM 9187 / NBRC 110442 / TA 4</strain>
    </source>
</reference>
<feature type="chain" id="PRO_1000205534" description="DNA-directed RNA polymerase subunit omega">
    <location>
        <begin position="1"/>
        <end position="94"/>
    </location>
</feature>
<accession>C4L810</accession>